<name>ARLY_DINSH</name>
<sequence>MSDTKSNAMWGGRFAAGPDAIMEAINASIGFDRRLARQDIDGSRAHAAMLAQQGILSSKDAEAIREGLLTVLSEIETGQFAFSAALEDIHMNVEARLKELIGEPAGRLHTGRSRNDQVATDFKLWVRDQLDAADAGLLALLRALLAQAEAGADWVMPGFTHLQTAQPVTWGHHMMAYVEMFARDRGRMQDARARMNECPLGAAALAGTSFPLDRDATAQALGFDRPAANSLDAVSDRDFALEFLAAASICAMHLSRMAEELVIWSSAQFRFVTLSDRFSTGSSIMPQKKNPDAAELIRAKIGRIVGANVALLTVMKGLPLAYSKDMQEDKEQVFDAADTLMLALAAMEGMVRDMTANRASLEDAAASGFSTATDLADWLVRELNLPFRDAHHVTGTLVAMAEAKGCDLPDLSLAEMQSVHGAIRADVFEVLGVHNSVASRTSYGGTAPSQVRAQVARWKERLG</sequence>
<proteinExistence type="inferred from homology"/>
<protein>
    <recommendedName>
        <fullName evidence="1">Argininosuccinate lyase</fullName>
        <shortName evidence="1">ASAL</shortName>
        <ecNumber evidence="1">4.3.2.1</ecNumber>
    </recommendedName>
    <alternativeName>
        <fullName evidence="1">Arginosuccinase</fullName>
    </alternativeName>
</protein>
<reference key="1">
    <citation type="journal article" date="2010" name="ISME J.">
        <title>The complete genome sequence of the algal symbiont Dinoroseobacter shibae: a hitchhiker's guide to life in the sea.</title>
        <authorList>
            <person name="Wagner-Dobler I."/>
            <person name="Ballhausen B."/>
            <person name="Berger M."/>
            <person name="Brinkhoff T."/>
            <person name="Buchholz I."/>
            <person name="Bunk B."/>
            <person name="Cypionka H."/>
            <person name="Daniel R."/>
            <person name="Drepper T."/>
            <person name="Gerdts G."/>
            <person name="Hahnke S."/>
            <person name="Han C."/>
            <person name="Jahn D."/>
            <person name="Kalhoefer D."/>
            <person name="Kiss H."/>
            <person name="Klenk H.P."/>
            <person name="Kyrpides N."/>
            <person name="Liebl W."/>
            <person name="Liesegang H."/>
            <person name="Meincke L."/>
            <person name="Pati A."/>
            <person name="Petersen J."/>
            <person name="Piekarski T."/>
            <person name="Pommerenke C."/>
            <person name="Pradella S."/>
            <person name="Pukall R."/>
            <person name="Rabus R."/>
            <person name="Stackebrandt E."/>
            <person name="Thole S."/>
            <person name="Thompson L."/>
            <person name="Tielen P."/>
            <person name="Tomasch J."/>
            <person name="von Jan M."/>
            <person name="Wanphrut N."/>
            <person name="Wichels A."/>
            <person name="Zech H."/>
            <person name="Simon M."/>
        </authorList>
    </citation>
    <scope>NUCLEOTIDE SEQUENCE [LARGE SCALE GENOMIC DNA]</scope>
    <source>
        <strain>DSM 16493 / NCIMB 14021 / DFL 12</strain>
    </source>
</reference>
<feature type="chain" id="PRO_0000335824" description="Argininosuccinate lyase">
    <location>
        <begin position="1"/>
        <end position="463"/>
    </location>
</feature>
<comment type="catalytic activity">
    <reaction evidence="1">
        <text>2-(N(omega)-L-arginino)succinate = fumarate + L-arginine</text>
        <dbReference type="Rhea" id="RHEA:24020"/>
        <dbReference type="ChEBI" id="CHEBI:29806"/>
        <dbReference type="ChEBI" id="CHEBI:32682"/>
        <dbReference type="ChEBI" id="CHEBI:57472"/>
        <dbReference type="EC" id="4.3.2.1"/>
    </reaction>
</comment>
<comment type="pathway">
    <text evidence="1">Amino-acid biosynthesis; L-arginine biosynthesis; L-arginine from L-ornithine and carbamoyl phosphate: step 3/3.</text>
</comment>
<comment type="subcellular location">
    <subcellularLocation>
        <location evidence="1">Cytoplasm</location>
    </subcellularLocation>
</comment>
<comment type="similarity">
    <text evidence="1">Belongs to the lyase 1 family. Argininosuccinate lyase subfamily.</text>
</comment>
<organism>
    <name type="scientific">Dinoroseobacter shibae (strain DSM 16493 / NCIMB 14021 / DFL 12)</name>
    <dbReference type="NCBI Taxonomy" id="398580"/>
    <lineage>
        <taxon>Bacteria</taxon>
        <taxon>Pseudomonadati</taxon>
        <taxon>Pseudomonadota</taxon>
        <taxon>Alphaproteobacteria</taxon>
        <taxon>Rhodobacterales</taxon>
        <taxon>Roseobacteraceae</taxon>
        <taxon>Dinoroseobacter</taxon>
    </lineage>
</organism>
<evidence type="ECO:0000255" key="1">
    <source>
        <dbReference type="HAMAP-Rule" id="MF_00006"/>
    </source>
</evidence>
<accession>A8LL46</accession>
<keyword id="KW-0028">Amino-acid biosynthesis</keyword>
<keyword id="KW-0055">Arginine biosynthesis</keyword>
<keyword id="KW-0963">Cytoplasm</keyword>
<keyword id="KW-0456">Lyase</keyword>
<keyword id="KW-1185">Reference proteome</keyword>
<dbReference type="EC" id="4.3.2.1" evidence="1"/>
<dbReference type="EMBL" id="CP000830">
    <property type="protein sequence ID" value="ABV94795.1"/>
    <property type="molecule type" value="Genomic_DNA"/>
</dbReference>
<dbReference type="RefSeq" id="WP_012179723.1">
    <property type="nucleotide sequence ID" value="NC_009952.1"/>
</dbReference>
<dbReference type="SMR" id="A8LL46"/>
<dbReference type="STRING" id="398580.Dshi_3062"/>
<dbReference type="KEGG" id="dsh:Dshi_3062"/>
<dbReference type="eggNOG" id="COG0165">
    <property type="taxonomic scope" value="Bacteria"/>
</dbReference>
<dbReference type="HOGENOM" id="CLU_027272_2_3_5"/>
<dbReference type="OrthoDB" id="9769623at2"/>
<dbReference type="UniPathway" id="UPA00068">
    <property type="reaction ID" value="UER00114"/>
</dbReference>
<dbReference type="Proteomes" id="UP000006833">
    <property type="component" value="Chromosome"/>
</dbReference>
<dbReference type="GO" id="GO:0005829">
    <property type="term" value="C:cytosol"/>
    <property type="evidence" value="ECO:0007669"/>
    <property type="project" value="TreeGrafter"/>
</dbReference>
<dbReference type="GO" id="GO:0004056">
    <property type="term" value="F:argininosuccinate lyase activity"/>
    <property type="evidence" value="ECO:0007669"/>
    <property type="project" value="UniProtKB-UniRule"/>
</dbReference>
<dbReference type="GO" id="GO:0042450">
    <property type="term" value="P:arginine biosynthetic process via ornithine"/>
    <property type="evidence" value="ECO:0007669"/>
    <property type="project" value="InterPro"/>
</dbReference>
<dbReference type="GO" id="GO:0006526">
    <property type="term" value="P:L-arginine biosynthetic process"/>
    <property type="evidence" value="ECO:0007669"/>
    <property type="project" value="UniProtKB-UniRule"/>
</dbReference>
<dbReference type="CDD" id="cd01359">
    <property type="entry name" value="Argininosuccinate_lyase"/>
    <property type="match status" value="1"/>
</dbReference>
<dbReference type="FunFam" id="1.10.275.10:FF:000002">
    <property type="entry name" value="Argininosuccinate lyase"/>
    <property type="match status" value="1"/>
</dbReference>
<dbReference type="FunFam" id="1.10.40.30:FF:000001">
    <property type="entry name" value="Argininosuccinate lyase"/>
    <property type="match status" value="1"/>
</dbReference>
<dbReference type="FunFam" id="1.20.200.10:FF:000015">
    <property type="entry name" value="argininosuccinate lyase isoform X2"/>
    <property type="match status" value="1"/>
</dbReference>
<dbReference type="Gene3D" id="1.10.40.30">
    <property type="entry name" value="Fumarase/aspartase (C-terminal domain)"/>
    <property type="match status" value="1"/>
</dbReference>
<dbReference type="Gene3D" id="1.20.200.10">
    <property type="entry name" value="Fumarase/aspartase (Central domain)"/>
    <property type="match status" value="1"/>
</dbReference>
<dbReference type="Gene3D" id="1.10.275.10">
    <property type="entry name" value="Fumarase/aspartase (N-terminal domain)"/>
    <property type="match status" value="1"/>
</dbReference>
<dbReference type="HAMAP" id="MF_00006">
    <property type="entry name" value="Arg_succ_lyase"/>
    <property type="match status" value="1"/>
</dbReference>
<dbReference type="InterPro" id="IPR029419">
    <property type="entry name" value="Arg_succ_lyase_C"/>
</dbReference>
<dbReference type="InterPro" id="IPR009049">
    <property type="entry name" value="Argininosuccinate_lyase"/>
</dbReference>
<dbReference type="InterPro" id="IPR024083">
    <property type="entry name" value="Fumarase/histidase_N"/>
</dbReference>
<dbReference type="InterPro" id="IPR020557">
    <property type="entry name" value="Fumarate_lyase_CS"/>
</dbReference>
<dbReference type="InterPro" id="IPR000362">
    <property type="entry name" value="Fumarate_lyase_fam"/>
</dbReference>
<dbReference type="InterPro" id="IPR022761">
    <property type="entry name" value="Fumarate_lyase_N"/>
</dbReference>
<dbReference type="InterPro" id="IPR008948">
    <property type="entry name" value="L-Aspartase-like"/>
</dbReference>
<dbReference type="NCBIfam" id="TIGR00838">
    <property type="entry name" value="argH"/>
    <property type="match status" value="1"/>
</dbReference>
<dbReference type="PANTHER" id="PTHR43814">
    <property type="entry name" value="ARGININOSUCCINATE LYASE"/>
    <property type="match status" value="1"/>
</dbReference>
<dbReference type="PANTHER" id="PTHR43814:SF1">
    <property type="entry name" value="ARGININOSUCCINATE LYASE"/>
    <property type="match status" value="1"/>
</dbReference>
<dbReference type="Pfam" id="PF14698">
    <property type="entry name" value="ASL_C2"/>
    <property type="match status" value="1"/>
</dbReference>
<dbReference type="Pfam" id="PF00206">
    <property type="entry name" value="Lyase_1"/>
    <property type="match status" value="1"/>
</dbReference>
<dbReference type="PRINTS" id="PR00145">
    <property type="entry name" value="ARGSUCLYASE"/>
</dbReference>
<dbReference type="PRINTS" id="PR00149">
    <property type="entry name" value="FUMRATELYASE"/>
</dbReference>
<dbReference type="SUPFAM" id="SSF48557">
    <property type="entry name" value="L-aspartase-like"/>
    <property type="match status" value="1"/>
</dbReference>
<dbReference type="PROSITE" id="PS00163">
    <property type="entry name" value="FUMARATE_LYASES"/>
    <property type="match status" value="1"/>
</dbReference>
<gene>
    <name evidence="1" type="primary">argH</name>
    <name type="ordered locus">Dshi_3062</name>
</gene>